<gene>
    <name type="primary">Gipc2</name>
    <name type="synonym">Semcap2</name>
</gene>
<evidence type="ECO:0000255" key="1">
    <source>
        <dbReference type="PROSITE-ProRule" id="PRU00143"/>
    </source>
</evidence>
<evidence type="ECO:0000256" key="2">
    <source>
        <dbReference type="SAM" id="MobiDB-lite"/>
    </source>
</evidence>
<evidence type="ECO:0000269" key="3">
    <source>
    </source>
</evidence>
<evidence type="ECO:0000305" key="4"/>
<accession>Q9Z2H7</accession>
<accession>Q9CVG2</accession>
<keyword id="KW-0002">3D-structure</keyword>
<keyword id="KW-0963">Cytoplasm</keyword>
<keyword id="KW-1185">Reference proteome</keyword>
<protein>
    <recommendedName>
        <fullName>PDZ domain-containing protein GIPC2</fullName>
    </recommendedName>
    <alternativeName>
        <fullName>SemaF cytoplasmic domain-associated protein 2</fullName>
        <shortName>SEMCAP-2</shortName>
    </alternativeName>
</protein>
<sequence length="314" mass="34118">MPLGLRGKKKAAKSKEAARLVEGERSSGSQGVPGPPAPARKLVFHAQLAHGSATGRVEDFSSISELYAKIAGVFEIAPSEILFCTLNTPKIDMGKLLGGQLGLEDFIFAHVKGTKKEVNVYKSEDSLGLTITDNGVGYAFIKRIKDGSTIDSVKTICVGDHIECINGENIVGWRHFEVAKKLKELKKEELFTLQLIEPKKAFEIGPRSKAGKTSTEKIGTSRGTLRLRSKGPATVEELPSEAKAKAIGKVDDLLELYMGIRDIDLATTMFEAGKDKSNPDEFAVALDETLGDFAFPDEFLFDVWGAISDMKQGR</sequence>
<comment type="subunit">
    <text evidence="3">Probably interacts with SEMA5A.</text>
</comment>
<comment type="interaction">
    <interactant intactId="EBI-987119">
        <id>Q9Z2H7</id>
    </interactant>
    <interactant intactId="EBI-987075">
        <id>Q64151</id>
        <label>Sema4c</label>
    </interactant>
    <organismsDiffer>false</organismsDiffer>
    <experiments>3</experiments>
</comment>
<comment type="subcellular location">
    <subcellularLocation>
        <location evidence="4">Cytoplasm</location>
    </subcellularLocation>
</comment>
<comment type="tissue specificity">
    <text evidence="3">Expressed in kidney and lung (at protein level).</text>
</comment>
<comment type="similarity">
    <text evidence="4">Belongs to the GIPC family.</text>
</comment>
<reference key="1">
    <citation type="journal article" date="1999" name="J. Biol. Chem.">
        <title>A PDZ protein regulates the distribution of the transmembrane semaphorin, M-SemF.</title>
        <authorList>
            <person name="Wang L.-H."/>
            <person name="Kalb R.G."/>
            <person name="Strittmatter S.M."/>
        </authorList>
    </citation>
    <scope>NUCLEOTIDE SEQUENCE [MRNA]</scope>
    <scope>TISSUE SPECIFICITY</scope>
    <scope>INTERACTION WITH SEMA5A</scope>
</reference>
<reference key="2">
    <citation type="journal article" date="2005" name="Science">
        <title>The transcriptional landscape of the mammalian genome.</title>
        <authorList>
            <person name="Carninci P."/>
            <person name="Kasukawa T."/>
            <person name="Katayama S."/>
            <person name="Gough J."/>
            <person name="Frith M.C."/>
            <person name="Maeda N."/>
            <person name="Oyama R."/>
            <person name="Ravasi T."/>
            <person name="Lenhard B."/>
            <person name="Wells C."/>
            <person name="Kodzius R."/>
            <person name="Shimokawa K."/>
            <person name="Bajic V.B."/>
            <person name="Brenner S.E."/>
            <person name="Batalov S."/>
            <person name="Forrest A.R."/>
            <person name="Zavolan M."/>
            <person name="Davis M.J."/>
            <person name="Wilming L.G."/>
            <person name="Aidinis V."/>
            <person name="Allen J.E."/>
            <person name="Ambesi-Impiombato A."/>
            <person name="Apweiler R."/>
            <person name="Aturaliya R.N."/>
            <person name="Bailey T.L."/>
            <person name="Bansal M."/>
            <person name="Baxter L."/>
            <person name="Beisel K.W."/>
            <person name="Bersano T."/>
            <person name="Bono H."/>
            <person name="Chalk A.M."/>
            <person name="Chiu K.P."/>
            <person name="Choudhary V."/>
            <person name="Christoffels A."/>
            <person name="Clutterbuck D.R."/>
            <person name="Crowe M.L."/>
            <person name="Dalla E."/>
            <person name="Dalrymple B.P."/>
            <person name="de Bono B."/>
            <person name="Della Gatta G."/>
            <person name="di Bernardo D."/>
            <person name="Down T."/>
            <person name="Engstrom P."/>
            <person name="Fagiolini M."/>
            <person name="Faulkner G."/>
            <person name="Fletcher C.F."/>
            <person name="Fukushima T."/>
            <person name="Furuno M."/>
            <person name="Futaki S."/>
            <person name="Gariboldi M."/>
            <person name="Georgii-Hemming P."/>
            <person name="Gingeras T.R."/>
            <person name="Gojobori T."/>
            <person name="Green R.E."/>
            <person name="Gustincich S."/>
            <person name="Harbers M."/>
            <person name="Hayashi Y."/>
            <person name="Hensch T.K."/>
            <person name="Hirokawa N."/>
            <person name="Hill D."/>
            <person name="Huminiecki L."/>
            <person name="Iacono M."/>
            <person name="Ikeo K."/>
            <person name="Iwama A."/>
            <person name="Ishikawa T."/>
            <person name="Jakt M."/>
            <person name="Kanapin A."/>
            <person name="Katoh M."/>
            <person name="Kawasawa Y."/>
            <person name="Kelso J."/>
            <person name="Kitamura H."/>
            <person name="Kitano H."/>
            <person name="Kollias G."/>
            <person name="Krishnan S.P."/>
            <person name="Kruger A."/>
            <person name="Kummerfeld S.K."/>
            <person name="Kurochkin I.V."/>
            <person name="Lareau L.F."/>
            <person name="Lazarevic D."/>
            <person name="Lipovich L."/>
            <person name="Liu J."/>
            <person name="Liuni S."/>
            <person name="McWilliam S."/>
            <person name="Madan Babu M."/>
            <person name="Madera M."/>
            <person name="Marchionni L."/>
            <person name="Matsuda H."/>
            <person name="Matsuzawa S."/>
            <person name="Miki H."/>
            <person name="Mignone F."/>
            <person name="Miyake S."/>
            <person name="Morris K."/>
            <person name="Mottagui-Tabar S."/>
            <person name="Mulder N."/>
            <person name="Nakano N."/>
            <person name="Nakauchi H."/>
            <person name="Ng P."/>
            <person name="Nilsson R."/>
            <person name="Nishiguchi S."/>
            <person name="Nishikawa S."/>
            <person name="Nori F."/>
            <person name="Ohara O."/>
            <person name="Okazaki Y."/>
            <person name="Orlando V."/>
            <person name="Pang K.C."/>
            <person name="Pavan W.J."/>
            <person name="Pavesi G."/>
            <person name="Pesole G."/>
            <person name="Petrovsky N."/>
            <person name="Piazza S."/>
            <person name="Reed J."/>
            <person name="Reid J.F."/>
            <person name="Ring B.Z."/>
            <person name="Ringwald M."/>
            <person name="Rost B."/>
            <person name="Ruan Y."/>
            <person name="Salzberg S.L."/>
            <person name="Sandelin A."/>
            <person name="Schneider C."/>
            <person name="Schoenbach C."/>
            <person name="Sekiguchi K."/>
            <person name="Semple C.A."/>
            <person name="Seno S."/>
            <person name="Sessa L."/>
            <person name="Sheng Y."/>
            <person name="Shibata Y."/>
            <person name="Shimada H."/>
            <person name="Shimada K."/>
            <person name="Silva D."/>
            <person name="Sinclair B."/>
            <person name="Sperling S."/>
            <person name="Stupka E."/>
            <person name="Sugiura K."/>
            <person name="Sultana R."/>
            <person name="Takenaka Y."/>
            <person name="Taki K."/>
            <person name="Tammoja K."/>
            <person name="Tan S.L."/>
            <person name="Tang S."/>
            <person name="Taylor M.S."/>
            <person name="Tegner J."/>
            <person name="Teichmann S.A."/>
            <person name="Ueda H.R."/>
            <person name="van Nimwegen E."/>
            <person name="Verardo R."/>
            <person name="Wei C.L."/>
            <person name="Yagi K."/>
            <person name="Yamanishi H."/>
            <person name="Zabarovsky E."/>
            <person name="Zhu S."/>
            <person name="Zimmer A."/>
            <person name="Hide W."/>
            <person name="Bult C."/>
            <person name="Grimmond S.M."/>
            <person name="Teasdale R.D."/>
            <person name="Liu E.T."/>
            <person name="Brusic V."/>
            <person name="Quackenbush J."/>
            <person name="Wahlestedt C."/>
            <person name="Mattick J.S."/>
            <person name="Hume D.A."/>
            <person name="Kai C."/>
            <person name="Sasaki D."/>
            <person name="Tomaru Y."/>
            <person name="Fukuda S."/>
            <person name="Kanamori-Katayama M."/>
            <person name="Suzuki M."/>
            <person name="Aoki J."/>
            <person name="Arakawa T."/>
            <person name="Iida J."/>
            <person name="Imamura K."/>
            <person name="Itoh M."/>
            <person name="Kato T."/>
            <person name="Kawaji H."/>
            <person name="Kawagashira N."/>
            <person name="Kawashima T."/>
            <person name="Kojima M."/>
            <person name="Kondo S."/>
            <person name="Konno H."/>
            <person name="Nakano K."/>
            <person name="Ninomiya N."/>
            <person name="Nishio T."/>
            <person name="Okada M."/>
            <person name="Plessy C."/>
            <person name="Shibata K."/>
            <person name="Shiraki T."/>
            <person name="Suzuki S."/>
            <person name="Tagami M."/>
            <person name="Waki K."/>
            <person name="Watahiki A."/>
            <person name="Okamura-Oho Y."/>
            <person name="Suzuki H."/>
            <person name="Kawai J."/>
            <person name="Hayashizaki Y."/>
        </authorList>
    </citation>
    <scope>NUCLEOTIDE SEQUENCE [LARGE SCALE MRNA]</scope>
    <source>
        <strain>C57BL/6J</strain>
        <tissue>Amnion</tissue>
        <tissue>Small intestine</tissue>
        <tissue>Stomach</tissue>
    </source>
</reference>
<reference key="3">
    <citation type="journal article" date="2004" name="Genome Res.">
        <title>The status, quality, and expansion of the NIH full-length cDNA project: the Mammalian Gene Collection (MGC).</title>
        <authorList>
            <consortium name="The MGC Project Team"/>
        </authorList>
    </citation>
    <scope>NUCLEOTIDE SEQUENCE [LARGE SCALE MRNA]</scope>
    <source>
        <strain>FVB/N</strain>
        <tissue>Kidney</tissue>
    </source>
</reference>
<reference key="4">
    <citation type="journal article" date="2010" name="Cell">
        <title>A tissue-specific atlas of mouse protein phosphorylation and expression.</title>
        <authorList>
            <person name="Huttlin E.L."/>
            <person name="Jedrychowski M.P."/>
            <person name="Elias J.E."/>
            <person name="Goswami T."/>
            <person name="Rad R."/>
            <person name="Beausoleil S.A."/>
            <person name="Villen J."/>
            <person name="Haas W."/>
            <person name="Sowa M.E."/>
            <person name="Gygi S.P."/>
        </authorList>
    </citation>
    <scope>IDENTIFICATION BY MASS SPECTROMETRY [LARGE SCALE ANALYSIS]</scope>
    <source>
        <tissue>Kidney</tissue>
        <tissue>Lung</tissue>
    </source>
</reference>
<organism>
    <name type="scientific">Mus musculus</name>
    <name type="common">Mouse</name>
    <dbReference type="NCBI Taxonomy" id="10090"/>
    <lineage>
        <taxon>Eukaryota</taxon>
        <taxon>Metazoa</taxon>
        <taxon>Chordata</taxon>
        <taxon>Craniata</taxon>
        <taxon>Vertebrata</taxon>
        <taxon>Euteleostomi</taxon>
        <taxon>Mammalia</taxon>
        <taxon>Eutheria</taxon>
        <taxon>Euarchontoglires</taxon>
        <taxon>Glires</taxon>
        <taxon>Rodentia</taxon>
        <taxon>Myomorpha</taxon>
        <taxon>Muroidea</taxon>
        <taxon>Muridae</taxon>
        <taxon>Murinae</taxon>
        <taxon>Mus</taxon>
        <taxon>Mus</taxon>
    </lineage>
</organism>
<name>GIPC2_MOUSE</name>
<dbReference type="EMBL" id="AF061262">
    <property type="protein sequence ID" value="AAC72310.1"/>
    <property type="molecule type" value="mRNA"/>
</dbReference>
<dbReference type="EMBL" id="AK008307">
    <property type="protein sequence ID" value="BAB25591.1"/>
    <property type="molecule type" value="mRNA"/>
</dbReference>
<dbReference type="EMBL" id="AK008626">
    <property type="protein sequence ID" value="BAB25788.1"/>
    <property type="molecule type" value="mRNA"/>
</dbReference>
<dbReference type="EMBL" id="AK168560">
    <property type="protein sequence ID" value="BAE40433.1"/>
    <property type="molecule type" value="mRNA"/>
</dbReference>
<dbReference type="EMBL" id="BC013440">
    <property type="protein sequence ID" value="AAH13440.1"/>
    <property type="molecule type" value="mRNA"/>
</dbReference>
<dbReference type="CCDS" id="CCDS17914.1"/>
<dbReference type="RefSeq" id="NP_058563.1">
    <property type="nucleotide sequence ID" value="NM_016867.1"/>
</dbReference>
<dbReference type="PDB" id="5V6H">
    <property type="method" value="X-ray"/>
    <property type="resolution" value="3.60 A"/>
    <property type="chains" value="A/C/E/G/I=240-314"/>
</dbReference>
<dbReference type="PDBsum" id="5V6H"/>
<dbReference type="SMR" id="Q9Z2H7"/>
<dbReference type="FunCoup" id="Q9Z2H7">
    <property type="interactions" value="265"/>
</dbReference>
<dbReference type="IntAct" id="Q9Z2H7">
    <property type="interactions" value="3"/>
</dbReference>
<dbReference type="STRING" id="10090.ENSMUSP00000037328"/>
<dbReference type="iPTMnet" id="Q9Z2H7"/>
<dbReference type="PhosphoSitePlus" id="Q9Z2H7"/>
<dbReference type="jPOST" id="Q9Z2H7"/>
<dbReference type="PaxDb" id="10090-ENSMUSP00000037328"/>
<dbReference type="PeptideAtlas" id="Q9Z2H7"/>
<dbReference type="ProteomicsDB" id="267799"/>
<dbReference type="Antibodypedia" id="19742">
    <property type="antibodies" value="246 antibodies from 29 providers"/>
</dbReference>
<dbReference type="DNASU" id="54120"/>
<dbReference type="Ensembl" id="ENSMUST00000046614.10">
    <property type="protein sequence ID" value="ENSMUSP00000037328.9"/>
    <property type="gene ID" value="ENSMUSG00000039131.16"/>
</dbReference>
<dbReference type="GeneID" id="54120"/>
<dbReference type="KEGG" id="mmu:54120"/>
<dbReference type="UCSC" id="uc008rsp.1">
    <property type="organism name" value="mouse"/>
</dbReference>
<dbReference type="AGR" id="MGI:1889209"/>
<dbReference type="CTD" id="54810"/>
<dbReference type="MGI" id="MGI:1889209">
    <property type="gene designation" value="Gipc2"/>
</dbReference>
<dbReference type="VEuPathDB" id="HostDB:ENSMUSG00000039131"/>
<dbReference type="eggNOG" id="KOG3938">
    <property type="taxonomic scope" value="Eukaryota"/>
</dbReference>
<dbReference type="GeneTree" id="ENSGT00390000003420"/>
<dbReference type="HOGENOM" id="CLU_044527_1_0_1"/>
<dbReference type="InParanoid" id="Q9Z2H7"/>
<dbReference type="OMA" id="VGWRHYE"/>
<dbReference type="OrthoDB" id="6509831at2759"/>
<dbReference type="PhylomeDB" id="Q9Z2H7"/>
<dbReference type="TreeFam" id="TF313878"/>
<dbReference type="BioGRID-ORCS" id="54120">
    <property type="hits" value="5 hits in 78 CRISPR screens"/>
</dbReference>
<dbReference type="ChiTaRS" id="Gipc2">
    <property type="organism name" value="mouse"/>
</dbReference>
<dbReference type="PRO" id="PR:Q9Z2H7"/>
<dbReference type="Proteomes" id="UP000000589">
    <property type="component" value="Chromosome 3"/>
</dbReference>
<dbReference type="RNAct" id="Q9Z2H7">
    <property type="molecule type" value="protein"/>
</dbReference>
<dbReference type="Bgee" id="ENSMUSG00000039131">
    <property type="expression patterns" value="Expressed in pyloric antrum and 181 other cell types or tissues"/>
</dbReference>
<dbReference type="GO" id="GO:0005737">
    <property type="term" value="C:cytoplasm"/>
    <property type="evidence" value="ECO:0007669"/>
    <property type="project" value="UniProtKB-SubCell"/>
</dbReference>
<dbReference type="GO" id="GO:0042802">
    <property type="term" value="F:identical protein binding"/>
    <property type="evidence" value="ECO:0007669"/>
    <property type="project" value="Ensembl"/>
</dbReference>
<dbReference type="CDD" id="cd21180">
    <property type="entry name" value="GH2_GIPC"/>
    <property type="match status" value="1"/>
</dbReference>
<dbReference type="CDD" id="cd23078">
    <property type="entry name" value="PDZ_GIPC2"/>
    <property type="match status" value="1"/>
</dbReference>
<dbReference type="FunFam" id="2.30.42.10:FF:000097">
    <property type="entry name" value="PDZ domain-containing protein GIPC1 isoform 1"/>
    <property type="match status" value="1"/>
</dbReference>
<dbReference type="Gene3D" id="2.30.42.10">
    <property type="match status" value="1"/>
</dbReference>
<dbReference type="InterPro" id="IPR055349">
    <property type="entry name" value="GH2_GIPC"/>
</dbReference>
<dbReference type="InterPro" id="IPR056814">
    <property type="entry name" value="GIPC1-3_GH1"/>
</dbReference>
<dbReference type="InterPro" id="IPR017379">
    <property type="entry name" value="GIPC1/2/3"/>
</dbReference>
<dbReference type="InterPro" id="IPR001478">
    <property type="entry name" value="PDZ"/>
</dbReference>
<dbReference type="InterPro" id="IPR036034">
    <property type="entry name" value="PDZ_sf"/>
</dbReference>
<dbReference type="PANTHER" id="PTHR12259:SF3">
    <property type="entry name" value="PDZ DOMAIN-CONTAINING PROTEIN GIPC2"/>
    <property type="match status" value="1"/>
</dbReference>
<dbReference type="PANTHER" id="PTHR12259">
    <property type="entry name" value="RGS-GAIP INTERACTING PROTEIN GIPC"/>
    <property type="match status" value="1"/>
</dbReference>
<dbReference type="Pfam" id="PF25083">
    <property type="entry name" value="GIPC1_GH1"/>
    <property type="match status" value="1"/>
</dbReference>
<dbReference type="Pfam" id="PF25082">
    <property type="entry name" value="GIPC1_GH2"/>
    <property type="match status" value="1"/>
</dbReference>
<dbReference type="Pfam" id="PF00595">
    <property type="entry name" value="PDZ"/>
    <property type="match status" value="1"/>
</dbReference>
<dbReference type="PIRSF" id="PIRSF038083">
    <property type="entry name" value="UCP038083_GIPC"/>
    <property type="match status" value="1"/>
</dbReference>
<dbReference type="SMART" id="SM00228">
    <property type="entry name" value="PDZ"/>
    <property type="match status" value="1"/>
</dbReference>
<dbReference type="SUPFAM" id="SSF50156">
    <property type="entry name" value="PDZ domain-like"/>
    <property type="match status" value="1"/>
</dbReference>
<dbReference type="PROSITE" id="PS50106">
    <property type="entry name" value="PDZ"/>
    <property type="match status" value="1"/>
</dbReference>
<proteinExistence type="evidence at protein level"/>
<feature type="chain" id="PRO_0000247189" description="PDZ domain-containing protein GIPC2">
    <location>
        <begin position="1"/>
        <end position="314"/>
    </location>
</feature>
<feature type="domain" description="PDZ" evidence="1">
    <location>
        <begin position="117"/>
        <end position="197"/>
    </location>
</feature>
<feature type="region of interest" description="Disordered" evidence="2">
    <location>
        <begin position="1"/>
        <end position="36"/>
    </location>
</feature>
<feature type="compositionally biased region" description="Basic residues" evidence="2">
    <location>
        <begin position="1"/>
        <end position="12"/>
    </location>
</feature>
<feature type="compositionally biased region" description="Basic and acidic residues" evidence="2">
    <location>
        <begin position="13"/>
        <end position="25"/>
    </location>
</feature>
<feature type="sequence conflict" description="In Ref. 2; BAB25591." evidence="4" ref="2">
    <original>P</original>
    <variation>H</variation>
    <location>
        <position position="89"/>
    </location>
</feature>